<dbReference type="EC" id="5.4.3.8" evidence="1"/>
<dbReference type="EMBL" id="CR628336">
    <property type="protein sequence ID" value="CAH12642.1"/>
    <property type="molecule type" value="Genomic_DNA"/>
</dbReference>
<dbReference type="RefSeq" id="WP_011213816.1">
    <property type="nucleotide sequence ID" value="NC_006368.1"/>
</dbReference>
<dbReference type="SMR" id="Q5X529"/>
<dbReference type="KEGG" id="lpp:lpp1491"/>
<dbReference type="LegioList" id="lpp1491"/>
<dbReference type="HOGENOM" id="CLU_016922_1_5_6"/>
<dbReference type="UniPathway" id="UPA00251">
    <property type="reaction ID" value="UER00317"/>
</dbReference>
<dbReference type="GO" id="GO:0005737">
    <property type="term" value="C:cytoplasm"/>
    <property type="evidence" value="ECO:0007669"/>
    <property type="project" value="UniProtKB-SubCell"/>
</dbReference>
<dbReference type="GO" id="GO:0042286">
    <property type="term" value="F:glutamate-1-semialdehyde 2,1-aminomutase activity"/>
    <property type="evidence" value="ECO:0007669"/>
    <property type="project" value="UniProtKB-UniRule"/>
</dbReference>
<dbReference type="GO" id="GO:0030170">
    <property type="term" value="F:pyridoxal phosphate binding"/>
    <property type="evidence" value="ECO:0007669"/>
    <property type="project" value="InterPro"/>
</dbReference>
<dbReference type="GO" id="GO:0008483">
    <property type="term" value="F:transaminase activity"/>
    <property type="evidence" value="ECO:0007669"/>
    <property type="project" value="InterPro"/>
</dbReference>
<dbReference type="GO" id="GO:0006782">
    <property type="term" value="P:protoporphyrinogen IX biosynthetic process"/>
    <property type="evidence" value="ECO:0007669"/>
    <property type="project" value="UniProtKB-UniRule"/>
</dbReference>
<dbReference type="CDD" id="cd00610">
    <property type="entry name" value="OAT_like"/>
    <property type="match status" value="1"/>
</dbReference>
<dbReference type="FunFam" id="3.40.640.10:FF:000021">
    <property type="entry name" value="Glutamate-1-semialdehyde 2,1-aminomutase"/>
    <property type="match status" value="1"/>
</dbReference>
<dbReference type="Gene3D" id="3.90.1150.10">
    <property type="entry name" value="Aspartate Aminotransferase, domain 1"/>
    <property type="match status" value="1"/>
</dbReference>
<dbReference type="Gene3D" id="3.40.640.10">
    <property type="entry name" value="Type I PLP-dependent aspartate aminotransferase-like (Major domain)"/>
    <property type="match status" value="1"/>
</dbReference>
<dbReference type="HAMAP" id="MF_00375">
    <property type="entry name" value="HemL_aminotrans_3"/>
    <property type="match status" value="1"/>
</dbReference>
<dbReference type="InterPro" id="IPR004639">
    <property type="entry name" value="4pyrrol_synth_GluAld_NH2Trfase"/>
</dbReference>
<dbReference type="InterPro" id="IPR005814">
    <property type="entry name" value="Aminotrans_3"/>
</dbReference>
<dbReference type="InterPro" id="IPR049704">
    <property type="entry name" value="Aminotrans_3_PPA_site"/>
</dbReference>
<dbReference type="InterPro" id="IPR015424">
    <property type="entry name" value="PyrdxlP-dep_Trfase"/>
</dbReference>
<dbReference type="InterPro" id="IPR015421">
    <property type="entry name" value="PyrdxlP-dep_Trfase_major"/>
</dbReference>
<dbReference type="InterPro" id="IPR015422">
    <property type="entry name" value="PyrdxlP-dep_Trfase_small"/>
</dbReference>
<dbReference type="NCBIfam" id="TIGR00713">
    <property type="entry name" value="hemL"/>
    <property type="match status" value="1"/>
</dbReference>
<dbReference type="NCBIfam" id="NF000818">
    <property type="entry name" value="PRK00062.1"/>
    <property type="match status" value="1"/>
</dbReference>
<dbReference type="PANTHER" id="PTHR43713">
    <property type="entry name" value="GLUTAMATE-1-SEMIALDEHYDE 2,1-AMINOMUTASE"/>
    <property type="match status" value="1"/>
</dbReference>
<dbReference type="PANTHER" id="PTHR43713:SF3">
    <property type="entry name" value="GLUTAMATE-1-SEMIALDEHYDE 2,1-AMINOMUTASE 1, CHLOROPLASTIC-RELATED"/>
    <property type="match status" value="1"/>
</dbReference>
<dbReference type="Pfam" id="PF00202">
    <property type="entry name" value="Aminotran_3"/>
    <property type="match status" value="1"/>
</dbReference>
<dbReference type="SUPFAM" id="SSF53383">
    <property type="entry name" value="PLP-dependent transferases"/>
    <property type="match status" value="1"/>
</dbReference>
<dbReference type="PROSITE" id="PS00600">
    <property type="entry name" value="AA_TRANSFER_CLASS_3"/>
    <property type="match status" value="1"/>
</dbReference>
<keyword id="KW-0963">Cytoplasm</keyword>
<keyword id="KW-0413">Isomerase</keyword>
<keyword id="KW-0627">Porphyrin biosynthesis</keyword>
<keyword id="KW-0663">Pyridoxal phosphate</keyword>
<organism>
    <name type="scientific">Legionella pneumophila (strain Paris)</name>
    <dbReference type="NCBI Taxonomy" id="297246"/>
    <lineage>
        <taxon>Bacteria</taxon>
        <taxon>Pseudomonadati</taxon>
        <taxon>Pseudomonadota</taxon>
        <taxon>Gammaproteobacteria</taxon>
        <taxon>Legionellales</taxon>
        <taxon>Legionellaceae</taxon>
        <taxon>Legionella</taxon>
    </lineage>
</organism>
<gene>
    <name evidence="1" type="primary">hemL</name>
    <name type="ordered locus">lpp1491</name>
</gene>
<reference key="1">
    <citation type="journal article" date="2004" name="Nat. Genet.">
        <title>Evidence in the Legionella pneumophila genome for exploitation of host cell functions and high genome plasticity.</title>
        <authorList>
            <person name="Cazalet C."/>
            <person name="Rusniok C."/>
            <person name="Brueggemann H."/>
            <person name="Zidane N."/>
            <person name="Magnier A."/>
            <person name="Ma L."/>
            <person name="Tichit M."/>
            <person name="Jarraud S."/>
            <person name="Bouchier C."/>
            <person name="Vandenesch F."/>
            <person name="Kunst F."/>
            <person name="Etienne J."/>
            <person name="Glaser P."/>
            <person name="Buchrieser C."/>
        </authorList>
    </citation>
    <scope>NUCLEOTIDE SEQUENCE [LARGE SCALE GENOMIC DNA]</scope>
    <source>
        <strain>Paris</strain>
    </source>
</reference>
<name>GSA_LEGPA</name>
<protein>
    <recommendedName>
        <fullName evidence="1">Glutamate-1-semialdehyde 2,1-aminomutase</fullName>
        <shortName evidence="1">GSA</shortName>
        <ecNumber evidence="1">5.4.3.8</ecNumber>
    </recommendedName>
    <alternativeName>
        <fullName evidence="1">Glutamate-1-semialdehyde aminotransferase</fullName>
        <shortName evidence="1">GSA-AT</shortName>
    </alternativeName>
</protein>
<evidence type="ECO:0000255" key="1">
    <source>
        <dbReference type="HAMAP-Rule" id="MF_00375"/>
    </source>
</evidence>
<comment type="catalytic activity">
    <reaction evidence="1">
        <text>(S)-4-amino-5-oxopentanoate = 5-aminolevulinate</text>
        <dbReference type="Rhea" id="RHEA:14265"/>
        <dbReference type="ChEBI" id="CHEBI:57501"/>
        <dbReference type="ChEBI" id="CHEBI:356416"/>
        <dbReference type="EC" id="5.4.3.8"/>
    </reaction>
</comment>
<comment type="cofactor">
    <cofactor evidence="1">
        <name>pyridoxal 5'-phosphate</name>
        <dbReference type="ChEBI" id="CHEBI:597326"/>
    </cofactor>
</comment>
<comment type="pathway">
    <text evidence="1">Porphyrin-containing compound metabolism; protoporphyrin-IX biosynthesis; 5-aminolevulinate from L-glutamyl-tRNA(Glu): step 2/2.</text>
</comment>
<comment type="subunit">
    <text evidence="1">Homodimer.</text>
</comment>
<comment type="subcellular location">
    <subcellularLocation>
        <location evidence="1">Cytoplasm</location>
    </subcellularLocation>
</comment>
<comment type="similarity">
    <text evidence="1">Belongs to the class-III pyridoxal-phosphate-dependent aminotransferase family. HemL subfamily.</text>
</comment>
<accession>Q5X529</accession>
<feature type="chain" id="PRO_0000243581" description="Glutamate-1-semialdehyde 2,1-aminomutase">
    <location>
        <begin position="1"/>
        <end position="428"/>
    </location>
</feature>
<feature type="modified residue" description="N6-(pyridoxal phosphate)lysine" evidence="1">
    <location>
        <position position="265"/>
    </location>
</feature>
<proteinExistence type="inferred from homology"/>
<sequence>MSRSSDLFHKAQTIIPGGVNSPVRAFKGVGGEPVFFKSGKGAYLTDVDDKQYIDYVGSWGPLILGHCHPKVIEAVDNVLHSGMSFGAPTELEIQLAEKIASLMPSIEKIRMVNSGTEATMTAIRLARGFTNKNKFIKFNGCYHGHSDSLLVKAGSGLLTLGIPSTPGIPKSITEHTLTADFNNLEQVAQLFEKYPNDIATVILEPVPGNMGFILPKIEFLKGLRELCDQYNALLIFDEVMTGFRVGLHGAQGLFGIKPDITTLGKIIGGGMPVGALGGKREIMSFLAPEGPVYQAGTLSGNPLAMAAGLATLKEIEKINFFEDLSNTTNKLTEALADAAENANIPFFAASLGGMFGFCFTDKNSVENYFDVASSDEVLFKKFFHAMLAQGVYFAPSMYEAGFVSSMHGDLEIQKTYDAAELVLNQLSA</sequence>